<protein>
    <recommendedName>
        <fullName evidence="1">UDP-N-acetylmuramoyl-L-alanyl-D-glutamate--2,6-diaminopimelate ligase</fullName>
        <ecNumber evidence="1">6.3.2.13</ecNumber>
    </recommendedName>
    <alternativeName>
        <fullName evidence="1">Meso-A2pm-adding enzyme</fullName>
    </alternativeName>
    <alternativeName>
        <fullName evidence="1">Meso-diaminopimelate-adding enzyme</fullName>
    </alternativeName>
    <alternativeName>
        <fullName evidence="1">UDP-MurNAc-L-Ala-D-Glu:meso-diaminopimelate ligase</fullName>
    </alternativeName>
    <alternativeName>
        <fullName evidence="1">UDP-MurNAc-tripeptide synthetase</fullName>
    </alternativeName>
    <alternativeName>
        <fullName evidence="1">UDP-N-acetylmuramyl-tripeptide synthetase</fullName>
    </alternativeName>
</protein>
<reference key="1">
    <citation type="submission" date="2003-06" db="EMBL/GenBank/DDBJ databases">
        <title>The complete genome sequence of Haemophilus ducreyi.</title>
        <authorList>
            <person name="Munson R.S. Jr."/>
            <person name="Ray W.C."/>
            <person name="Mahairas G."/>
            <person name="Sabo P."/>
            <person name="Mungur R."/>
            <person name="Johnson L."/>
            <person name="Nguyen D."/>
            <person name="Wang J."/>
            <person name="Forst C."/>
            <person name="Hood L."/>
        </authorList>
    </citation>
    <scope>NUCLEOTIDE SEQUENCE [LARGE SCALE GENOMIC DNA]</scope>
    <source>
        <strain>35000HP / ATCC 700724</strain>
    </source>
</reference>
<accession>Q7VP59</accession>
<keyword id="KW-0067">ATP-binding</keyword>
<keyword id="KW-0131">Cell cycle</keyword>
<keyword id="KW-0132">Cell division</keyword>
<keyword id="KW-0133">Cell shape</keyword>
<keyword id="KW-0961">Cell wall biogenesis/degradation</keyword>
<keyword id="KW-0963">Cytoplasm</keyword>
<keyword id="KW-0436">Ligase</keyword>
<keyword id="KW-0460">Magnesium</keyword>
<keyword id="KW-0547">Nucleotide-binding</keyword>
<keyword id="KW-0573">Peptidoglycan synthesis</keyword>
<keyword id="KW-1185">Reference proteome</keyword>
<name>MURE_HAEDU</name>
<proteinExistence type="inferred from homology"/>
<evidence type="ECO:0000255" key="1">
    <source>
        <dbReference type="HAMAP-Rule" id="MF_00208"/>
    </source>
</evidence>
<gene>
    <name evidence="1" type="primary">murE</name>
    <name type="ordered locus">HD_0242</name>
</gene>
<dbReference type="EC" id="6.3.2.13" evidence="1"/>
<dbReference type="EMBL" id="AE017143">
    <property type="protein sequence ID" value="AAP95228.1"/>
    <property type="molecule type" value="Genomic_DNA"/>
</dbReference>
<dbReference type="RefSeq" id="WP_010944281.1">
    <property type="nucleotide sequence ID" value="NC_002940.2"/>
</dbReference>
<dbReference type="SMR" id="Q7VP59"/>
<dbReference type="STRING" id="233412.HD_0242"/>
<dbReference type="KEGG" id="hdu:HD_0242"/>
<dbReference type="eggNOG" id="COG0769">
    <property type="taxonomic scope" value="Bacteria"/>
</dbReference>
<dbReference type="HOGENOM" id="CLU_022291_3_2_6"/>
<dbReference type="OrthoDB" id="9800958at2"/>
<dbReference type="UniPathway" id="UPA00219"/>
<dbReference type="Proteomes" id="UP000001022">
    <property type="component" value="Chromosome"/>
</dbReference>
<dbReference type="GO" id="GO:0005737">
    <property type="term" value="C:cytoplasm"/>
    <property type="evidence" value="ECO:0007669"/>
    <property type="project" value="UniProtKB-SubCell"/>
</dbReference>
<dbReference type="GO" id="GO:0005524">
    <property type="term" value="F:ATP binding"/>
    <property type="evidence" value="ECO:0007669"/>
    <property type="project" value="UniProtKB-UniRule"/>
</dbReference>
<dbReference type="GO" id="GO:0000287">
    <property type="term" value="F:magnesium ion binding"/>
    <property type="evidence" value="ECO:0007669"/>
    <property type="project" value="UniProtKB-UniRule"/>
</dbReference>
<dbReference type="GO" id="GO:0008765">
    <property type="term" value="F:UDP-N-acetylmuramoylalanyl-D-glutamate-2,6-diaminopimelate ligase activity"/>
    <property type="evidence" value="ECO:0007669"/>
    <property type="project" value="UniProtKB-UniRule"/>
</dbReference>
<dbReference type="GO" id="GO:0051301">
    <property type="term" value="P:cell division"/>
    <property type="evidence" value="ECO:0007669"/>
    <property type="project" value="UniProtKB-KW"/>
</dbReference>
<dbReference type="GO" id="GO:0071555">
    <property type="term" value="P:cell wall organization"/>
    <property type="evidence" value="ECO:0007669"/>
    <property type="project" value="UniProtKB-KW"/>
</dbReference>
<dbReference type="GO" id="GO:0009252">
    <property type="term" value="P:peptidoglycan biosynthetic process"/>
    <property type="evidence" value="ECO:0007669"/>
    <property type="project" value="UniProtKB-UniRule"/>
</dbReference>
<dbReference type="GO" id="GO:0008360">
    <property type="term" value="P:regulation of cell shape"/>
    <property type="evidence" value="ECO:0007669"/>
    <property type="project" value="UniProtKB-KW"/>
</dbReference>
<dbReference type="Gene3D" id="3.90.190.20">
    <property type="entry name" value="Mur ligase, C-terminal domain"/>
    <property type="match status" value="1"/>
</dbReference>
<dbReference type="Gene3D" id="3.40.1190.10">
    <property type="entry name" value="Mur-like, catalytic domain"/>
    <property type="match status" value="1"/>
</dbReference>
<dbReference type="Gene3D" id="3.40.1390.10">
    <property type="entry name" value="MurE/MurF, N-terminal domain"/>
    <property type="match status" value="1"/>
</dbReference>
<dbReference type="HAMAP" id="MF_00208">
    <property type="entry name" value="MurE"/>
    <property type="match status" value="1"/>
</dbReference>
<dbReference type="InterPro" id="IPR036565">
    <property type="entry name" value="Mur-like_cat_sf"/>
</dbReference>
<dbReference type="InterPro" id="IPR004101">
    <property type="entry name" value="Mur_ligase_C"/>
</dbReference>
<dbReference type="InterPro" id="IPR036615">
    <property type="entry name" value="Mur_ligase_C_dom_sf"/>
</dbReference>
<dbReference type="InterPro" id="IPR013221">
    <property type="entry name" value="Mur_ligase_cen"/>
</dbReference>
<dbReference type="InterPro" id="IPR000713">
    <property type="entry name" value="Mur_ligase_N"/>
</dbReference>
<dbReference type="InterPro" id="IPR035911">
    <property type="entry name" value="MurE/MurF_N"/>
</dbReference>
<dbReference type="InterPro" id="IPR005761">
    <property type="entry name" value="UDP-N-AcMur-Glu-dNH2Pim_ligase"/>
</dbReference>
<dbReference type="NCBIfam" id="TIGR01085">
    <property type="entry name" value="murE"/>
    <property type="match status" value="1"/>
</dbReference>
<dbReference type="NCBIfam" id="NF001123">
    <property type="entry name" value="PRK00139.1-1"/>
    <property type="match status" value="1"/>
</dbReference>
<dbReference type="NCBIfam" id="NF001124">
    <property type="entry name" value="PRK00139.1-2"/>
    <property type="match status" value="1"/>
</dbReference>
<dbReference type="NCBIfam" id="NF001126">
    <property type="entry name" value="PRK00139.1-4"/>
    <property type="match status" value="1"/>
</dbReference>
<dbReference type="PANTHER" id="PTHR23135">
    <property type="entry name" value="MUR LIGASE FAMILY MEMBER"/>
    <property type="match status" value="1"/>
</dbReference>
<dbReference type="PANTHER" id="PTHR23135:SF4">
    <property type="entry name" value="UDP-N-ACETYLMURAMOYL-L-ALANYL-D-GLUTAMATE--2,6-DIAMINOPIMELATE LIGASE MURE HOMOLOG, CHLOROPLASTIC"/>
    <property type="match status" value="1"/>
</dbReference>
<dbReference type="Pfam" id="PF01225">
    <property type="entry name" value="Mur_ligase"/>
    <property type="match status" value="1"/>
</dbReference>
<dbReference type="Pfam" id="PF02875">
    <property type="entry name" value="Mur_ligase_C"/>
    <property type="match status" value="1"/>
</dbReference>
<dbReference type="Pfam" id="PF08245">
    <property type="entry name" value="Mur_ligase_M"/>
    <property type="match status" value="1"/>
</dbReference>
<dbReference type="SUPFAM" id="SSF53623">
    <property type="entry name" value="MurD-like peptide ligases, catalytic domain"/>
    <property type="match status" value="1"/>
</dbReference>
<dbReference type="SUPFAM" id="SSF53244">
    <property type="entry name" value="MurD-like peptide ligases, peptide-binding domain"/>
    <property type="match status" value="1"/>
</dbReference>
<dbReference type="SUPFAM" id="SSF63418">
    <property type="entry name" value="MurE/MurF N-terminal domain"/>
    <property type="match status" value="1"/>
</dbReference>
<feature type="chain" id="PRO_0000101899" description="UDP-N-acetylmuramoyl-L-alanyl-D-glutamate--2,6-diaminopimelate ligase">
    <location>
        <begin position="1"/>
        <end position="501"/>
    </location>
</feature>
<feature type="short sequence motif" description="Meso-diaminopimelate recognition motif">
    <location>
        <begin position="422"/>
        <end position="425"/>
    </location>
</feature>
<feature type="binding site" evidence="1">
    <location>
        <position position="26"/>
    </location>
    <ligand>
        <name>UDP-N-acetyl-alpha-D-muramoyl-L-alanyl-D-glutamate</name>
        <dbReference type="ChEBI" id="CHEBI:83900"/>
    </ligand>
</feature>
<feature type="binding site" evidence="1">
    <location>
        <position position="28"/>
    </location>
    <ligand>
        <name>UDP-N-acetyl-alpha-D-muramoyl-L-alanyl-D-glutamate</name>
        <dbReference type="ChEBI" id="CHEBI:83900"/>
    </ligand>
</feature>
<feature type="binding site" evidence="1">
    <location>
        <begin position="43"/>
        <end position="45"/>
    </location>
    <ligand>
        <name>UDP-N-acetyl-alpha-D-muramoyl-L-alanyl-D-glutamate</name>
        <dbReference type="ChEBI" id="CHEBI:83900"/>
    </ligand>
</feature>
<feature type="binding site" evidence="1">
    <location>
        <begin position="123"/>
        <end position="129"/>
    </location>
    <ligand>
        <name>ATP</name>
        <dbReference type="ChEBI" id="CHEBI:30616"/>
    </ligand>
</feature>
<feature type="binding site" evidence="1">
    <location>
        <position position="164"/>
    </location>
    <ligand>
        <name>UDP-N-acetyl-alpha-D-muramoyl-L-alanyl-D-glutamate</name>
        <dbReference type="ChEBI" id="CHEBI:83900"/>
    </ligand>
</feature>
<feature type="binding site" evidence="1">
    <location>
        <begin position="165"/>
        <end position="166"/>
    </location>
    <ligand>
        <name>UDP-N-acetyl-alpha-D-muramoyl-L-alanyl-D-glutamate</name>
        <dbReference type="ChEBI" id="CHEBI:83900"/>
    </ligand>
</feature>
<feature type="binding site" evidence="1">
    <location>
        <position position="192"/>
    </location>
    <ligand>
        <name>UDP-N-acetyl-alpha-D-muramoyl-L-alanyl-D-glutamate</name>
        <dbReference type="ChEBI" id="CHEBI:83900"/>
    </ligand>
</feature>
<feature type="binding site" evidence="1">
    <location>
        <position position="198"/>
    </location>
    <ligand>
        <name>UDP-N-acetyl-alpha-D-muramoyl-L-alanyl-D-glutamate</name>
        <dbReference type="ChEBI" id="CHEBI:83900"/>
    </ligand>
</feature>
<feature type="binding site" evidence="1">
    <location>
        <position position="200"/>
    </location>
    <ligand>
        <name>UDP-N-acetyl-alpha-D-muramoyl-L-alanyl-D-glutamate</name>
        <dbReference type="ChEBI" id="CHEBI:83900"/>
    </ligand>
</feature>
<feature type="binding site" evidence="1">
    <location>
        <position position="398"/>
    </location>
    <ligand>
        <name>meso-2,6-diaminopimelate</name>
        <dbReference type="ChEBI" id="CHEBI:57791"/>
    </ligand>
</feature>
<feature type="binding site" evidence="1">
    <location>
        <begin position="422"/>
        <end position="425"/>
    </location>
    <ligand>
        <name>meso-2,6-diaminopimelate</name>
        <dbReference type="ChEBI" id="CHEBI:57791"/>
    </ligand>
</feature>
<feature type="binding site" evidence="1">
    <location>
        <position position="473"/>
    </location>
    <ligand>
        <name>meso-2,6-diaminopimelate</name>
        <dbReference type="ChEBI" id="CHEBI:57791"/>
    </ligand>
</feature>
<feature type="binding site" evidence="1">
    <location>
        <position position="477"/>
    </location>
    <ligand>
        <name>meso-2,6-diaminopimelate</name>
        <dbReference type="ChEBI" id="CHEBI:57791"/>
    </ligand>
</feature>
<feature type="modified residue" description="N6-carboxylysine" evidence="1">
    <location>
        <position position="232"/>
    </location>
</feature>
<comment type="function">
    <text evidence="1">Catalyzes the addition of meso-diaminopimelic acid to the nucleotide precursor UDP-N-acetylmuramoyl-L-alanyl-D-glutamate (UMAG) in the biosynthesis of bacterial cell-wall peptidoglycan.</text>
</comment>
<comment type="catalytic activity">
    <reaction evidence="1">
        <text>UDP-N-acetyl-alpha-D-muramoyl-L-alanyl-D-glutamate + meso-2,6-diaminopimelate + ATP = UDP-N-acetyl-alpha-D-muramoyl-L-alanyl-gamma-D-glutamyl-meso-2,6-diaminopimelate + ADP + phosphate + H(+)</text>
        <dbReference type="Rhea" id="RHEA:23676"/>
        <dbReference type="ChEBI" id="CHEBI:15378"/>
        <dbReference type="ChEBI" id="CHEBI:30616"/>
        <dbReference type="ChEBI" id="CHEBI:43474"/>
        <dbReference type="ChEBI" id="CHEBI:57791"/>
        <dbReference type="ChEBI" id="CHEBI:83900"/>
        <dbReference type="ChEBI" id="CHEBI:83905"/>
        <dbReference type="ChEBI" id="CHEBI:456216"/>
        <dbReference type="EC" id="6.3.2.13"/>
    </reaction>
</comment>
<comment type="cofactor">
    <cofactor evidence="1">
        <name>Mg(2+)</name>
        <dbReference type="ChEBI" id="CHEBI:18420"/>
    </cofactor>
</comment>
<comment type="pathway">
    <text evidence="1">Cell wall biogenesis; peptidoglycan biosynthesis.</text>
</comment>
<comment type="subcellular location">
    <subcellularLocation>
        <location evidence="1">Cytoplasm</location>
    </subcellularLocation>
</comment>
<comment type="PTM">
    <text evidence="1">Carboxylation is probably crucial for Mg(2+) binding and, consequently, for the gamma-phosphate positioning of ATP.</text>
</comment>
<comment type="similarity">
    <text evidence="1">Belongs to the MurCDEF family. MurE subfamily.</text>
</comment>
<organism>
    <name type="scientific">Haemophilus ducreyi (strain 35000HP / ATCC 700724)</name>
    <dbReference type="NCBI Taxonomy" id="233412"/>
    <lineage>
        <taxon>Bacteria</taxon>
        <taxon>Pseudomonadati</taxon>
        <taxon>Pseudomonadota</taxon>
        <taxon>Gammaproteobacteria</taxon>
        <taxon>Pasteurellales</taxon>
        <taxon>Pasteurellaceae</taxon>
        <taxon>Haemophilus</taxon>
    </lineage>
</organism>
<sequence length="501" mass="55125">MKRLLPFLTDLEAWVEQLIPLKQMTLDSRQVTEGDLFIALKGHQCDGRQFIQNAIEQGAAIILAEAESDQDEIELDSQFARYNLDRRACKVITVPRLAERLSAIADSFYASPSAKLKLIGITGTNGKTTTAQLLAQWHNLLGGHSAVMGTIGNGLYGQEQEAINTTGSAIEVQQNLARFVEQGADFCAMEVSSHGLAQYRVEALQYDLAIFTNLSRDHLDYHHSIAAYEAAKFRLFNALQTKAQVLNADDQVAQNWLSMLPNAVLVSCDPNFTSEHQFVKATKVNFSLQGAYIEFESSWGNGQFHSQLSGAFNVTNILLALAGLLTLGYDLAKLVATASQLRSVTGRMQKVSAITDKNRPLVLVDYAHTPDALQKALQAARLHTKGKLFCVFGCGGDRDCGKRPLMATIAEELADGVIVTNDNPRTEDQHKIVAEIMQGFAKPDNILVIYDREQAIQHAIKHASSADLILIAGKGHENYQIIGTIKHHFSDQEIASKYLSQ</sequence>